<protein>
    <recommendedName>
        <fullName>SPbeta prophage-derived uncharacterized protein YopQ</fullName>
    </recommendedName>
</protein>
<reference key="1">
    <citation type="journal article" date="1997" name="Nature">
        <title>The complete genome sequence of the Gram-positive bacterium Bacillus subtilis.</title>
        <authorList>
            <person name="Kunst F."/>
            <person name="Ogasawara N."/>
            <person name="Moszer I."/>
            <person name="Albertini A.M."/>
            <person name="Alloni G."/>
            <person name="Azevedo V."/>
            <person name="Bertero M.G."/>
            <person name="Bessieres P."/>
            <person name="Bolotin A."/>
            <person name="Borchert S."/>
            <person name="Borriss R."/>
            <person name="Boursier L."/>
            <person name="Brans A."/>
            <person name="Braun M."/>
            <person name="Brignell S.C."/>
            <person name="Bron S."/>
            <person name="Brouillet S."/>
            <person name="Bruschi C.V."/>
            <person name="Caldwell B."/>
            <person name="Capuano V."/>
            <person name="Carter N.M."/>
            <person name="Choi S.-K."/>
            <person name="Codani J.-J."/>
            <person name="Connerton I.F."/>
            <person name="Cummings N.J."/>
            <person name="Daniel R.A."/>
            <person name="Denizot F."/>
            <person name="Devine K.M."/>
            <person name="Duesterhoeft A."/>
            <person name="Ehrlich S.D."/>
            <person name="Emmerson P.T."/>
            <person name="Entian K.-D."/>
            <person name="Errington J."/>
            <person name="Fabret C."/>
            <person name="Ferrari E."/>
            <person name="Foulger D."/>
            <person name="Fritz C."/>
            <person name="Fujita M."/>
            <person name="Fujita Y."/>
            <person name="Fuma S."/>
            <person name="Galizzi A."/>
            <person name="Galleron N."/>
            <person name="Ghim S.-Y."/>
            <person name="Glaser P."/>
            <person name="Goffeau A."/>
            <person name="Golightly E.J."/>
            <person name="Grandi G."/>
            <person name="Guiseppi G."/>
            <person name="Guy B.J."/>
            <person name="Haga K."/>
            <person name="Haiech J."/>
            <person name="Harwood C.R."/>
            <person name="Henaut A."/>
            <person name="Hilbert H."/>
            <person name="Holsappel S."/>
            <person name="Hosono S."/>
            <person name="Hullo M.-F."/>
            <person name="Itaya M."/>
            <person name="Jones L.-M."/>
            <person name="Joris B."/>
            <person name="Karamata D."/>
            <person name="Kasahara Y."/>
            <person name="Klaerr-Blanchard M."/>
            <person name="Klein C."/>
            <person name="Kobayashi Y."/>
            <person name="Koetter P."/>
            <person name="Koningstein G."/>
            <person name="Krogh S."/>
            <person name="Kumano M."/>
            <person name="Kurita K."/>
            <person name="Lapidus A."/>
            <person name="Lardinois S."/>
            <person name="Lauber J."/>
            <person name="Lazarevic V."/>
            <person name="Lee S.-M."/>
            <person name="Levine A."/>
            <person name="Liu H."/>
            <person name="Masuda S."/>
            <person name="Mauel C."/>
            <person name="Medigue C."/>
            <person name="Medina N."/>
            <person name="Mellado R.P."/>
            <person name="Mizuno M."/>
            <person name="Moestl D."/>
            <person name="Nakai S."/>
            <person name="Noback M."/>
            <person name="Noone D."/>
            <person name="O'Reilly M."/>
            <person name="Ogawa K."/>
            <person name="Ogiwara A."/>
            <person name="Oudega B."/>
            <person name="Park S.-H."/>
            <person name="Parro V."/>
            <person name="Pohl T.M."/>
            <person name="Portetelle D."/>
            <person name="Porwollik S."/>
            <person name="Prescott A.M."/>
            <person name="Presecan E."/>
            <person name="Pujic P."/>
            <person name="Purnelle B."/>
            <person name="Rapoport G."/>
            <person name="Rey M."/>
            <person name="Reynolds S."/>
            <person name="Rieger M."/>
            <person name="Rivolta C."/>
            <person name="Rocha E."/>
            <person name="Roche B."/>
            <person name="Rose M."/>
            <person name="Sadaie Y."/>
            <person name="Sato T."/>
            <person name="Scanlan E."/>
            <person name="Schleich S."/>
            <person name="Schroeter R."/>
            <person name="Scoffone F."/>
            <person name="Sekiguchi J."/>
            <person name="Sekowska A."/>
            <person name="Seror S.J."/>
            <person name="Serror P."/>
            <person name="Shin B.-S."/>
            <person name="Soldo B."/>
            <person name="Sorokin A."/>
            <person name="Tacconi E."/>
            <person name="Takagi T."/>
            <person name="Takahashi H."/>
            <person name="Takemaru K."/>
            <person name="Takeuchi M."/>
            <person name="Tamakoshi A."/>
            <person name="Tanaka T."/>
            <person name="Terpstra P."/>
            <person name="Tognoni A."/>
            <person name="Tosato V."/>
            <person name="Uchiyama S."/>
            <person name="Vandenbol M."/>
            <person name="Vannier F."/>
            <person name="Vassarotti A."/>
            <person name="Viari A."/>
            <person name="Wambutt R."/>
            <person name="Wedler E."/>
            <person name="Wedler H."/>
            <person name="Weitzenegger T."/>
            <person name="Winters P."/>
            <person name="Wipat A."/>
            <person name="Yamamoto H."/>
            <person name="Yamane K."/>
            <person name="Yasumoto K."/>
            <person name="Yata K."/>
            <person name="Yoshida K."/>
            <person name="Yoshikawa H.-F."/>
            <person name="Zumstein E."/>
            <person name="Yoshikawa H."/>
            <person name="Danchin A."/>
        </authorList>
    </citation>
    <scope>NUCLEOTIDE SEQUENCE [LARGE SCALE GENOMIC DNA]</scope>
    <source>
        <strain>168</strain>
    </source>
</reference>
<name>YOPQ_BACSU</name>
<feature type="chain" id="PRO_0000359972" description="SPbeta prophage-derived uncharacterized protein YopQ">
    <location>
        <begin position="1"/>
        <end position="460"/>
    </location>
</feature>
<dbReference type="EMBL" id="AL009126">
    <property type="protein sequence ID" value="CAB13972.1"/>
    <property type="molecule type" value="Genomic_DNA"/>
</dbReference>
<dbReference type="RefSeq" id="NP_389962.1">
    <property type="nucleotide sequence ID" value="NC_000964.3"/>
</dbReference>
<dbReference type="RefSeq" id="WP_004399247.1">
    <property type="nucleotide sequence ID" value="NZ_OZ025638.1"/>
</dbReference>
<dbReference type="FunCoup" id="O34448">
    <property type="interactions" value="10"/>
</dbReference>
<dbReference type="IntAct" id="O34448">
    <property type="interactions" value="1"/>
</dbReference>
<dbReference type="MINT" id="O34448"/>
<dbReference type="STRING" id="224308.BSU20800"/>
<dbReference type="PaxDb" id="224308-BSU20800"/>
<dbReference type="EnsemblBacteria" id="CAB13972">
    <property type="protein sequence ID" value="CAB13972"/>
    <property type="gene ID" value="BSU_20800"/>
</dbReference>
<dbReference type="GeneID" id="936481"/>
<dbReference type="KEGG" id="bsu:BSU20800"/>
<dbReference type="PATRIC" id="fig|224308.179.peg.2270"/>
<dbReference type="eggNOG" id="ENOG50331Y8">
    <property type="taxonomic scope" value="Bacteria"/>
</dbReference>
<dbReference type="InParanoid" id="O34448"/>
<dbReference type="OrthoDB" id="2399905at2"/>
<dbReference type="BioCyc" id="BSUB:BSU20800-MONOMER"/>
<dbReference type="Proteomes" id="UP000001570">
    <property type="component" value="Chromosome"/>
</dbReference>
<dbReference type="InterPro" id="IPR017642">
    <property type="entry name" value="DNA_S_mod_DndB"/>
</dbReference>
<dbReference type="Pfam" id="PF14072">
    <property type="entry name" value="DndB"/>
    <property type="match status" value="1"/>
</dbReference>
<gene>
    <name type="primary">yopQ</name>
    <name type="ordered locus">BSU20800</name>
</gene>
<organism>
    <name type="scientific">Bacillus subtilis (strain 168)</name>
    <dbReference type="NCBI Taxonomy" id="224308"/>
    <lineage>
        <taxon>Bacteria</taxon>
        <taxon>Bacillati</taxon>
        <taxon>Bacillota</taxon>
        <taxon>Bacilli</taxon>
        <taxon>Bacillales</taxon>
        <taxon>Bacillaceae</taxon>
        <taxon>Bacillus</taxon>
    </lineage>
</organism>
<sequence>MTVIFDQSANEKLLSEMKDAISKNKHIRSFINDIQLEMAKNKITPGTTQKLIYDIENPEVEISKEYMYFLAKSLYSVLESERFNPRNYFTETDMREIETLWEGSVEEDIKFPYTFKQVVKYSDDNYFFPITAKELFMLFENKLLHYNPNAQRTNKTKKLEGSDIEIPVPQLNKQSVEEIKELFLDGKLIKSVFTFNARVGSASCGEELKYDDDTMSLTVTEDTILDVLDGYHRLIGITMAIRQHPELDHLFEETFKVDIYNYTQKRAREHFGQQNTINPVKKSKVAEMSQNVYSNKIVKFIQDNSIIGDYIKTNGDWINQNQNLLITFSDFKKAIERSYSKKDFSTQADILKTARYLTSFFDALATQYVDEFLGDIAKERKRSFVNNYLFFNGYVGLAKKLQLDGVSLDELESKITDVLGSIDFSKKNKLWDELGVVDKNGNAKSPQKIWNFFNNLKIDE</sequence>
<keyword id="KW-1185">Reference proteome</keyword>
<accession>O34448</accession>
<proteinExistence type="predicted"/>